<name>W4934_FUSPC</name>
<accession>K3VYH8</accession>
<keyword id="KW-0067">ATP-binding</keyword>
<keyword id="KW-0325">Glycoprotein</keyword>
<keyword id="KW-0472">Membrane</keyword>
<keyword id="KW-0547">Nucleotide-binding</keyword>
<keyword id="KW-1185">Reference proteome</keyword>
<keyword id="KW-0677">Repeat</keyword>
<keyword id="KW-0812">Transmembrane</keyword>
<keyword id="KW-1133">Transmembrane helix</keyword>
<keyword id="KW-0813">Transport</keyword>
<comment type="function">
    <text evidence="6 9">ABC transporter; part of the gene cluster that mediates the biosynthesis of the lipopeptides W493 A and B (PubMed:25412204). W493 A and B consist of six amino acid residues D-allo-thr, L-Ala, D-Ala, L-Gln, D-Tyr, and L-Val/L-Ile linked to a 3-hydroxy-4-methyltetradecanoic acid polyketide chain (PubMed:25412204). May be involved in excretion or internal transport of W493 A and B (Probable).</text>
</comment>
<comment type="subcellular location">
    <subcellularLocation>
        <location evidence="1">Membrane</location>
        <topology evidence="1">Multi-pass membrane protein</topology>
    </subcellularLocation>
</comment>
<comment type="similarity">
    <text evidence="8">Belongs to the ABC transporter superfamily. ABCB family. Multidrug resistance exporter (TC 3.A.1.201) subfamily.</text>
</comment>
<feature type="chain" id="PRO_0000445366" description="ABC transporter FPSE_09185">
    <location>
        <begin position="1"/>
        <end position="1305"/>
    </location>
</feature>
<feature type="transmembrane region" description="Helical" evidence="1 3">
    <location>
        <begin position="44"/>
        <end position="64"/>
    </location>
</feature>
<feature type="transmembrane region" description="Helical" evidence="1 3">
    <location>
        <begin position="99"/>
        <end position="119"/>
    </location>
</feature>
<feature type="transmembrane region" description="Helical" evidence="1 3">
    <location>
        <begin position="172"/>
        <end position="192"/>
    </location>
</feature>
<feature type="transmembrane region" description="Helical" evidence="1 3">
    <location>
        <begin position="199"/>
        <end position="219"/>
    </location>
</feature>
<feature type="transmembrane region" description="Helical" evidence="1 3">
    <location>
        <begin position="277"/>
        <end position="297"/>
    </location>
</feature>
<feature type="transmembrane region" description="Helical" evidence="1 3">
    <location>
        <begin position="312"/>
        <end position="332"/>
    </location>
</feature>
<feature type="transmembrane region" description="Helical" evidence="1 3">
    <location>
        <begin position="737"/>
        <end position="757"/>
    </location>
</feature>
<feature type="transmembrane region" description="Helical" evidence="1 3">
    <location>
        <begin position="780"/>
        <end position="800"/>
    </location>
</feature>
<feature type="transmembrane region" description="Helical" evidence="1 3">
    <location>
        <begin position="851"/>
        <end position="873"/>
    </location>
</feature>
<feature type="transmembrane region" description="Helical" evidence="1 3">
    <location>
        <begin position="877"/>
        <end position="899"/>
    </location>
</feature>
<feature type="transmembrane region" description="Helical" evidence="1 3">
    <location>
        <begin position="964"/>
        <end position="984"/>
    </location>
</feature>
<feature type="transmembrane region" description="Helical" evidence="1 3">
    <location>
        <begin position="999"/>
        <end position="1019"/>
    </location>
</feature>
<feature type="domain" description="ABC transmembrane type-1 1" evidence="3">
    <location>
        <begin position="48"/>
        <end position="348"/>
    </location>
</feature>
<feature type="domain" description="ABC transporter 1" evidence="2">
    <location>
        <begin position="372"/>
        <end position="663"/>
    </location>
</feature>
<feature type="domain" description="ABC transmembrane type-1 2" evidence="3">
    <location>
        <begin position="738"/>
        <end position="1025"/>
    </location>
</feature>
<feature type="domain" description="ABC transporter 2" evidence="2">
    <location>
        <begin position="1062"/>
        <end position="1300"/>
    </location>
</feature>
<feature type="region of interest" description="Disordered" evidence="5">
    <location>
        <begin position="434"/>
        <end position="454"/>
    </location>
</feature>
<feature type="region of interest" description="Disordered" evidence="5">
    <location>
        <begin position="1038"/>
        <end position="1057"/>
    </location>
</feature>
<feature type="compositionally biased region" description="Basic and acidic residues" evidence="5">
    <location>
        <begin position="440"/>
        <end position="454"/>
    </location>
</feature>
<feature type="binding site" evidence="2">
    <location>
        <begin position="407"/>
        <end position="414"/>
    </location>
    <ligand>
        <name>ATP</name>
        <dbReference type="ChEBI" id="CHEBI:30616"/>
    </ligand>
</feature>
<feature type="binding site" evidence="2">
    <location>
        <begin position="1096"/>
        <end position="1103"/>
    </location>
    <ligand>
        <name>ATP</name>
        <dbReference type="ChEBI" id="CHEBI:30616"/>
    </ligand>
</feature>
<feature type="glycosylation site" description="N-linked (GlcNAc...) asparagine" evidence="4">
    <location>
        <position position="28"/>
    </location>
</feature>
<feature type="glycosylation site" description="N-linked (GlcNAc...) asparagine" evidence="4">
    <location>
        <position position="468"/>
    </location>
</feature>
<feature type="glycosylation site" description="N-linked (GlcNAc...) asparagine" evidence="4">
    <location>
        <position position="507"/>
    </location>
</feature>
<feature type="glycosylation site" description="N-linked (GlcNAc...) asparagine" evidence="4">
    <location>
        <position position="525"/>
    </location>
</feature>
<feature type="glycosylation site" description="N-linked (GlcNAc...) asparagine" evidence="4">
    <location>
        <position position="1040"/>
    </location>
</feature>
<feature type="glycosylation site" description="N-linked (GlcNAc...) asparagine" evidence="4">
    <location>
        <position position="1066"/>
    </location>
</feature>
<feature type="glycosylation site" description="N-linked (GlcNAc...) asparagine" evidence="4">
    <location>
        <position position="1075"/>
    </location>
</feature>
<feature type="glycosylation site" description="N-linked (GlcNAc...) asparagine" evidence="4">
    <location>
        <position position="1125"/>
    </location>
</feature>
<evidence type="ECO:0000255" key="1"/>
<evidence type="ECO:0000255" key="2">
    <source>
        <dbReference type="PROSITE-ProRule" id="PRU00434"/>
    </source>
</evidence>
<evidence type="ECO:0000255" key="3">
    <source>
        <dbReference type="PROSITE-ProRule" id="PRU00441"/>
    </source>
</evidence>
<evidence type="ECO:0000255" key="4">
    <source>
        <dbReference type="PROSITE-ProRule" id="PRU00498"/>
    </source>
</evidence>
<evidence type="ECO:0000256" key="5">
    <source>
        <dbReference type="SAM" id="MobiDB-lite"/>
    </source>
</evidence>
<evidence type="ECO:0000269" key="6">
    <source>
    </source>
</evidence>
<evidence type="ECO:0000303" key="7">
    <source>
    </source>
</evidence>
<evidence type="ECO:0000305" key="8"/>
<evidence type="ECO:0000305" key="9">
    <source>
    </source>
</evidence>
<dbReference type="EMBL" id="CM003198">
    <property type="protein sequence ID" value="EKJ70675.1"/>
    <property type="molecule type" value="Genomic_DNA"/>
</dbReference>
<dbReference type="RefSeq" id="XP_009260577.1">
    <property type="nucleotide sequence ID" value="XM_009262302.1"/>
</dbReference>
<dbReference type="SMR" id="K3VYH8"/>
<dbReference type="EnsemblFungi" id="EKJ70675">
    <property type="protein sequence ID" value="EKJ70675"/>
    <property type="gene ID" value="FPSE_09185"/>
</dbReference>
<dbReference type="GeneID" id="20367802"/>
<dbReference type="KEGG" id="fpu:FPSE_09185"/>
<dbReference type="eggNOG" id="KOG0055">
    <property type="taxonomic scope" value="Eukaryota"/>
</dbReference>
<dbReference type="HOGENOM" id="CLU_000604_17_8_1"/>
<dbReference type="OrthoDB" id="6500128at2759"/>
<dbReference type="Proteomes" id="UP000007978">
    <property type="component" value="Chromosome 1"/>
</dbReference>
<dbReference type="GO" id="GO:0005743">
    <property type="term" value="C:mitochondrial inner membrane"/>
    <property type="evidence" value="ECO:0007669"/>
    <property type="project" value="TreeGrafter"/>
</dbReference>
<dbReference type="GO" id="GO:0015421">
    <property type="term" value="F:ABC-type oligopeptide transporter activity"/>
    <property type="evidence" value="ECO:0007669"/>
    <property type="project" value="TreeGrafter"/>
</dbReference>
<dbReference type="GO" id="GO:0005524">
    <property type="term" value="F:ATP binding"/>
    <property type="evidence" value="ECO:0007669"/>
    <property type="project" value="UniProtKB-KW"/>
</dbReference>
<dbReference type="GO" id="GO:0016887">
    <property type="term" value="F:ATP hydrolysis activity"/>
    <property type="evidence" value="ECO:0007669"/>
    <property type="project" value="InterPro"/>
</dbReference>
<dbReference type="GO" id="GO:0090374">
    <property type="term" value="P:oligopeptide export from mitochondrion"/>
    <property type="evidence" value="ECO:0007669"/>
    <property type="project" value="TreeGrafter"/>
</dbReference>
<dbReference type="CDD" id="cd18577">
    <property type="entry name" value="ABC_6TM_Pgp_ABCB1_D1_like"/>
    <property type="match status" value="1"/>
</dbReference>
<dbReference type="CDD" id="cd18578">
    <property type="entry name" value="ABC_6TM_Pgp_ABCB1_D2_like"/>
    <property type="match status" value="1"/>
</dbReference>
<dbReference type="CDD" id="cd03249">
    <property type="entry name" value="ABC_MTABC3_MDL1_MDL2"/>
    <property type="match status" value="1"/>
</dbReference>
<dbReference type="FunFam" id="3.40.50.300:FF:000913">
    <property type="entry name" value="ABC multidrug transporter SitT"/>
    <property type="match status" value="1"/>
</dbReference>
<dbReference type="Gene3D" id="1.20.1560.10">
    <property type="entry name" value="ABC transporter type 1, transmembrane domain"/>
    <property type="match status" value="1"/>
</dbReference>
<dbReference type="Gene3D" id="3.40.50.300">
    <property type="entry name" value="P-loop containing nucleotide triphosphate hydrolases"/>
    <property type="match status" value="2"/>
</dbReference>
<dbReference type="InterPro" id="IPR003593">
    <property type="entry name" value="AAA+_ATPase"/>
</dbReference>
<dbReference type="InterPro" id="IPR011527">
    <property type="entry name" value="ABC1_TM_dom"/>
</dbReference>
<dbReference type="InterPro" id="IPR036640">
    <property type="entry name" value="ABC1_TM_sf"/>
</dbReference>
<dbReference type="InterPro" id="IPR003439">
    <property type="entry name" value="ABC_transporter-like_ATP-bd"/>
</dbReference>
<dbReference type="InterPro" id="IPR017871">
    <property type="entry name" value="ABC_transporter-like_CS"/>
</dbReference>
<dbReference type="InterPro" id="IPR027417">
    <property type="entry name" value="P-loop_NTPase"/>
</dbReference>
<dbReference type="InterPro" id="IPR039421">
    <property type="entry name" value="Type_1_exporter"/>
</dbReference>
<dbReference type="PANTHER" id="PTHR43394">
    <property type="entry name" value="ATP-DEPENDENT PERMEASE MDL1, MITOCHONDRIAL"/>
    <property type="match status" value="1"/>
</dbReference>
<dbReference type="PANTHER" id="PTHR43394:SF27">
    <property type="entry name" value="ATP-DEPENDENT TRANSLOCASE ABCB1-LIKE"/>
    <property type="match status" value="1"/>
</dbReference>
<dbReference type="Pfam" id="PF00664">
    <property type="entry name" value="ABC_membrane"/>
    <property type="match status" value="2"/>
</dbReference>
<dbReference type="Pfam" id="PF00005">
    <property type="entry name" value="ABC_tran"/>
    <property type="match status" value="3"/>
</dbReference>
<dbReference type="SMART" id="SM00382">
    <property type="entry name" value="AAA"/>
    <property type="match status" value="2"/>
</dbReference>
<dbReference type="SUPFAM" id="SSF90123">
    <property type="entry name" value="ABC transporter transmembrane region"/>
    <property type="match status" value="2"/>
</dbReference>
<dbReference type="SUPFAM" id="SSF52540">
    <property type="entry name" value="P-loop containing nucleoside triphosphate hydrolases"/>
    <property type="match status" value="3"/>
</dbReference>
<dbReference type="PROSITE" id="PS50929">
    <property type="entry name" value="ABC_TM1F"/>
    <property type="match status" value="2"/>
</dbReference>
<dbReference type="PROSITE" id="PS00211">
    <property type="entry name" value="ABC_TRANSPORTER_1"/>
    <property type="match status" value="2"/>
</dbReference>
<dbReference type="PROSITE" id="PS50893">
    <property type="entry name" value="ABC_TRANSPORTER_2"/>
    <property type="match status" value="2"/>
</dbReference>
<organism>
    <name type="scientific">Fusarium pseudograminearum (strain CS3096)</name>
    <name type="common">Wheat and barley crown-rot fungus</name>
    <dbReference type="NCBI Taxonomy" id="1028729"/>
    <lineage>
        <taxon>Eukaryota</taxon>
        <taxon>Fungi</taxon>
        <taxon>Dikarya</taxon>
        <taxon>Ascomycota</taxon>
        <taxon>Pezizomycotina</taxon>
        <taxon>Sordariomycetes</taxon>
        <taxon>Hypocreomycetidae</taxon>
        <taxon>Hypocreales</taxon>
        <taxon>Nectriaceae</taxon>
        <taxon>Fusarium</taxon>
    </lineage>
</organism>
<sequence length="1305" mass="143128">MADHQARQSGSSQRTVIPDPQLAKEKSNLTNYLRVFAYATRWDFCVYVVGALASIGVGVTMPLMNVVLGQLVGDFSDTVQDPYNMDLNNFKSMLQKQSLYIVGLFLGRWLLNSINKFCFRMIGIRLSSAIRHHYLRSLFAQSIHVIDSMPPGAAATAITATSNTLQIGVSERLGTFVTYVSTIIAAIAVAFTRSWSLTIVSASLLVYIAIIIAIVVPIYLKANAATLKADAQGTAVASEALQGIRLVNACGAHERIISKYSKWVTKAMERSQRVAPIIGAQTGLVFFGIFGVFGLAFWYGTQQFIHGVIKNVGVVIIVLTSVMLILFAFSYLEQPIMAISQAMVAATELFKVIDAPLPPMGSFTPDINSKDLIFKDVTFEYPSRPGARVLDGLSFRIQAGQNTALVGPSGSGKSTIVGLLERWYSLKHSPVLPEAATPRSSKEGERDNHDERKYERSTYEVPIMVPTNLTGALSGSISIGAHDLDDLEGKWWRAQIGLVQQEPFLFNSSIFENVANGLLGTVWENESEAKKRKMVQDACQEAYAHEFICRLPDAYDTRVGDGGAKLSGGQKQRIAIARSIVKRPQIMILDEATSAIDAKSEKIVQAALDRAIKTRTTITIAHRLSTIQKADHIVVLSKGRVVEEGTHKSLMEHENGVYYSLVEAQSLRLSTTDDTDSDLPATTYVAELKSAAVDIEQPLEVQNDEDNGPVVEPEVLRTLTQSFVKLLEGLRDQSSSFLLITIASMGVGAATPLQAWLFAKAVIVFISPSDDLKKEGDFWGFMWLALAGGVGVAYFFQCWISLRLQYHVGATTKQSYLRDMLYQELSFFDDDSRSSGTLIGRIAGDPKQVEGVFGLNLASATSSVFTIVGCLIISLTFGWKLGLVGLCVTVPIMMVSGFWKFRHELQFDQMNAAVFAESSQFASEAIGAMRTVSSLTMESAINNRYKQLLDGHVEAARRKAQWTAVIFGFAESATLGCQALILWYGGRLISSGEYSLEAFMVSYMAIINGVEYAGQILGVAPSAAQAAAAANRILDVQDSNRSSQEAEKSGPTVEDTDGGVEIELCNVSFKYPTRNVSIYKNLDLTIKKGQYAALVGPSGCGKTTIISLLERFYDLEPNHGEILWNGTNINDFGVYQYREHLSLVSQEPILFRGTIRDNILFGVADPSSVPEERIHEVCRDVFIHDVIVSLPDGYNTEVGAMSLSGGQKQRIAIARALIRNPKLLLLDEATSALDSESEKIVQAAFEKARKRRTMIAVAHRLATIQDADIIFVFDQGMVVEKGTHGELLQKRGIYWDMCQTQALDQ</sequence>
<gene>
    <name type="ORF">FPSE_09185</name>
</gene>
<reference key="1">
    <citation type="journal article" date="2012" name="PLoS Pathog.">
        <title>Comparative pathogenomics reveals horizontally acquired novel virulence genes in fungi infecting cereal hosts.</title>
        <authorList>
            <person name="Gardiner D.M."/>
            <person name="McDonald M.C."/>
            <person name="Covarelli L."/>
            <person name="Solomon P.S."/>
            <person name="Rusu A.G."/>
            <person name="Marshall M."/>
            <person name="Kazan K."/>
            <person name="Chakraborty S."/>
            <person name="McDonald B.A."/>
            <person name="Manners J.M."/>
        </authorList>
    </citation>
    <scope>NUCLEOTIDE SEQUENCE [LARGE SCALE GENOMIC DNA]</scope>
    <source>
        <strain>CS3096</strain>
    </source>
</reference>
<reference key="2">
    <citation type="journal article" date="2014" name="J. Nat. Prod.">
        <title>Identification of the biosynthetic gene clusters for the lipopeptides fusaristatin A and W493 B in Fusarium graminearum and F. pseudograminearum.</title>
        <authorList>
            <person name="Soerensen J.L."/>
            <person name="Sondergaard T.E."/>
            <person name="Covarelli L."/>
            <person name="Fuertes P.R."/>
            <person name="Hansen F.T."/>
            <person name="Frandsen R.J."/>
            <person name="Saei W."/>
            <person name="Lukassen M.B."/>
            <person name="Wimmer R."/>
            <person name="Nielsen K.F."/>
            <person name="Gardiner D.M."/>
            <person name="Giese H."/>
        </authorList>
    </citation>
    <scope>IDENTIFICATION</scope>
    <scope>FUNCTION</scope>
</reference>
<proteinExistence type="inferred from homology"/>
<protein>
    <recommendedName>
        <fullName evidence="7">ABC transporter FPSE_09185</fullName>
    </recommendedName>
    <alternativeName>
        <fullName evidence="7">W493 A and B biosynthesis cluster protein FPSE_09185</fullName>
    </alternativeName>
</protein>